<keyword id="KW-0002">3D-structure</keyword>
<keyword id="KW-0025">Alternative splicing</keyword>
<keyword id="KW-0040">ANK repeat</keyword>
<keyword id="KW-1003">Cell membrane</keyword>
<keyword id="KW-0966">Cell projection</keyword>
<keyword id="KW-0963">Cytoplasm</keyword>
<keyword id="KW-0206">Cytoskeleton</keyword>
<keyword id="KW-0458">Lysosome</keyword>
<keyword id="KW-0472">Membrane</keyword>
<keyword id="KW-0597">Phosphoprotein</keyword>
<keyword id="KW-0628">Postsynaptic cell membrane</keyword>
<keyword id="KW-1185">Reference proteome</keyword>
<keyword id="KW-0677">Repeat</keyword>
<keyword id="KW-0770">Synapse</keyword>
<comment type="function">
    <text evidence="1 2 10">Membrane-cytoskeleton linker. May participate in the maintenance/targeting of ion channels and cell adhesion molecules at the nodes of Ranvier and axonal initial segments (By similarity). In skeletal muscle, required for costamere localization of DMD and betaDAG1 (By similarity). Regulates KCNA1 channel activity in function of dietary Mg(2+) levels, and thereby contributes to the regulation of renal Mg(2+) reabsorption (By similarity). Required for intracellular adhesion and junctional conductance in myocytes, potentially via stabilization of GJA1/CX43 protein abundance and promotion of PKP2, GJA1/CX43, and SCN5A/Nav1.5 localization to cell-cell junctions (PubMed:21617128).</text>
</comment>
<comment type="subunit">
    <text evidence="1 2 9 10">May be a constituent of a NFASC/NRCAM/ankyrin G complex. Interacts with RHBG. Directly interacts with DMD and betaDAG1; this interaction does not interfere with DMD-binding and is required for DMD and betaDAG1 retention at costameres. Interacts (via N-terminal ANK repeats) with SCHIP1 isoform 7 (via C-terminus); this interaction is required for the localization at axon initial segments (AISs) and nodes of Ranvier (NRs) (By similarity). Interacts with PLEC and FLNC (PubMed:21223964). Interacts (via ANK repeats) with IQCJ-SCHIP1; required for IQCJ-SCHIP1 localization at axon initial segments (AIS) and nodes of Ranvier (By similarity). Interacts with SCHIP1 (By similarity). Interacts with KCNA1; this inhibits channel activity (By similarity). Interacts with SCN5A (By similarity). Interacts with PKP2 and GJA1/CX43 (PubMed:21617128).</text>
</comment>
<comment type="subunit">
    <molecule>Isoform 7</molecule>
    <text evidence="9">Interacts (via its C-terminal muscle-specific Obscurin/Titin-Binding-related domain sequence) with PLEC and FLNC.</text>
</comment>
<comment type="interaction">
    <interactant intactId="EBI-9663485">
        <id>O70511-7</id>
    </interactant>
    <interactant intactId="EBI-489954">
        <id>Q14315</id>
        <label>FLNC</label>
    </interactant>
    <organismsDiffer>true</organismsDiffer>
    <experiments>2</experiments>
</comment>
<comment type="subcellular location">
    <subcellularLocation>
        <location evidence="2">Cytoplasm</location>
        <location evidence="2">Cytoskeleton</location>
    </subcellularLocation>
    <subcellularLocation>
        <location evidence="11">Cell projection</location>
        <location evidence="11">Axon</location>
    </subcellularLocation>
    <subcellularLocation>
        <location evidence="9">Cell membrane</location>
    </subcellularLocation>
    <subcellularLocation>
        <location evidence="8 9">Cell membrane</location>
        <location evidence="8 9">Sarcolemma</location>
    </subcellularLocation>
    <subcellularLocation>
        <location evidence="6">Postsynaptic cell membrane</location>
    </subcellularLocation>
    <subcellularLocation>
        <location evidence="1">Lysosome</location>
    </subcellularLocation>
    <subcellularLocation>
        <location evidence="7">Cell membrane</location>
        <location evidence="7">Sarcolemma</location>
        <location evidence="7">T-tubule</location>
    </subcellularLocation>
    <text>When transfected in root dorsal ganglia, predominantly located in the axolemma of the axon proximal segments (PubMed:9744885). Also associated with the plasma membrane in neuron cell bodies, although at a lower level than in the axon proximal segment (PubMed:9744885). Isoform 1 is restricted to the axolemma of the axon proximal segment. Isoforms containing the muscle-specific 76 amino-acid insertion localize to the sarcolemma and on the postsynaptic membrane of neuromuscular junctions (PubMed:11796721).</text>
</comment>
<comment type="alternative products">
    <event type="alternative splicing"/>
    <isoform>
        <id>O70511-1</id>
        <name>1</name>
        <name>AnkG270</name>
        <sequence type="displayed"/>
    </isoform>
    <isoform>
        <id>O70511-2</id>
        <name>2</name>
        <name>AnkG217</name>
        <sequence type="described" ref="VSP_055005 VSP_055006 VSP_055007 VSP_055008 VSP_055009 VSP_055011"/>
    </isoform>
    <isoform>
        <id>O70511-3</id>
        <name>3</name>
        <name>AnkG197</name>
        <sequence type="described" ref="VSP_055005 VSP_055006 VSP_055007 VSP_055008 VSP_055010 VSP_055012"/>
    </isoform>
    <isoform>
        <id>O70511-4</id>
        <name>4</name>
        <name>Ank130</name>
        <sequence type="described" ref="VSP_055004 VSP_055008 VSP_055009 VSP_055013"/>
    </isoform>
    <isoform>
        <id>O70511-5</id>
        <name>5</name>
        <name>AnkG128</name>
        <sequence type="described" ref="VSP_055004 VSP_055008 VSP_055009 VSP_055011"/>
    </isoform>
    <isoform>
        <id>O70511-6</id>
        <name>6</name>
        <name>AnkG109</name>
        <sequence type="described" ref="VSP_055004 VSP_055008 VSP_055010 VSP_055013"/>
    </isoform>
    <isoform>
        <id>O70511-7</id>
        <name>7</name>
        <name>AnkG107</name>
        <sequence type="described" ref="VSP_055004 VSP_055008 VSP_055010 VSP_055011"/>
    </isoform>
</comment>
<comment type="tissue specificity">
    <text evidence="8 9 10">Expressed in the heart (at protein level) (PubMed:21617128). Expressed in skeletal muscle (at protein level) (PubMed:21223964). Expressed at highest levels in brain and testis, followed by skin, kidney, liver and spleen (PubMed:15953600).</text>
</comment>
<comment type="tissue specificity">
    <molecule>Isoform 2</molecule>
    <text evidence="6">May be specifically expressed in muscle tissues, including heart and skeletal muscle (extensor digitorum longus) (at protein level).</text>
</comment>
<comment type="tissue specificity">
    <molecule>Isoform 3</molecule>
    <text evidence="6">May be specifically expressed in muscle tissues, including heart and skeletal muscle (extensor digitorum longus) (at protein level).</text>
</comment>
<comment type="tissue specificity">
    <molecule>Isoform 4</molecule>
    <text evidence="6">May be specifically expressed in muscle tissues, including heart and skeletal muscle (extensor digitorum longus) (at protein level).</text>
</comment>
<comment type="tissue specificity">
    <molecule>Isoform 5</molecule>
    <text evidence="6">May be specifically expressed in muscle tissues, including heart and skeletal muscle (extensor digitorum longus) (at protein level).</text>
</comment>
<comment type="tissue specificity">
    <molecule>Isoform 6</molecule>
    <text evidence="6">May be specifically expressed in muscle tissues, including heart and skeletal muscle (extensor digitorum longus) (at protein level).</text>
</comment>
<comment type="tissue specificity">
    <molecule>Isoform 7</molecule>
    <text evidence="6">Expressed in skeletal muscle, brain, lung, heart, testes and kidney.</text>
</comment>
<comment type="miscellaneous">
    <molecule>Isoform 2</molecule>
    <text evidence="14">The 76 amino-acid long sequence from Asp-1888 to Val-1963 is encoded by a muscle-specific exon.</text>
</comment>
<comment type="miscellaneous">
    <molecule>Isoform 3</molecule>
    <text evidence="14">The 76 amino-acid long sequence from Asp-1710 to Val-1785 is encoded by a muscle-specific exon.</text>
</comment>
<comment type="miscellaneous">
    <molecule>Isoform 4</molecule>
    <text evidence="14">The 76 amino-acid long sequence from Asp-1077 to Val-1152 is encoded by a muscle-specific exon.</text>
</comment>
<comment type="miscellaneous">
    <molecule>Isoform 5</molecule>
    <text evidence="14">The 76 amino-acid long sequence from Asp-1060 to Val-1135 is encoded by a muscle-specific exon.</text>
</comment>
<comment type="miscellaneous">
    <molecule>Isoform 6</molecule>
    <text evidence="14">The 76 amino-acid long sequence from Asp-881 to Val-956 is encoded by a muscle-specific exon.</text>
</comment>
<comment type="miscellaneous">
    <molecule>Isoform 7</molecule>
    <text evidence="14">The 76 amino-acid long sequence from Asp-864 to Val-939 is encoded by a muscle-specific exon.</text>
</comment>
<reference key="1">
    <citation type="journal article" date="1998" name="J. Cell Biol.">
        <title>Restriction of 480/270-kD ankyrin G to axon proximal segments requires multiple ankyrin G-specific domains.</title>
        <authorList>
            <person name="Zhang X."/>
            <person name="Bennett V."/>
        </authorList>
    </citation>
    <scope>NUCLEOTIDE SEQUENCE [MRNA] (ISOFORM 1)</scope>
    <scope>SUBCELLULAR LOCATION</scope>
</reference>
<reference key="2">
    <citation type="journal article" date="2002" name="J. Biol. Chem.">
        <title>Identification of Ank(G107), a muscle-specific ankyrin-G isoform.</title>
        <authorList>
            <person name="Gagelin C."/>
            <person name="Constantin B."/>
            <person name="Deprette C."/>
            <person name="Ludosky M.A."/>
            <person name="Recouvreur M."/>
            <person name="Cartaud J."/>
            <person name="Cognard C."/>
            <person name="Raymond G."/>
            <person name="Kordeli E."/>
        </authorList>
    </citation>
    <scope>NUCLEOTIDE SEQUENCE [MRNA] (ISOFORM 7)</scope>
    <scope>SUBCELLULAR LOCATION</scope>
    <scope>TISSUE SPECIFICITY (ISOFORMS 2; 3; 4; 5; 6 AND 7)</scope>
    <source>
        <strain>Sprague-Dawley</strain>
        <tissue>Skeletal muscle</tissue>
    </source>
</reference>
<reference key="3">
    <citation type="journal article" date="2005" name="Exp. Cell Res.">
        <title>Ankyrin-G in skeletal muscle: tissue-specific alternative splicing contributes to the complexity of the sarcolemmal cytoskeleton.</title>
        <authorList>
            <person name="Hopitzan A.A."/>
            <person name="Baines A.J."/>
            <person name="Ludosky M.A."/>
            <person name="Recouvreur M."/>
            <person name="Kordeli E."/>
        </authorList>
    </citation>
    <scope>NUCLEOTIDE SEQUENCE [MRNA] (ISOFORMS 2; 3; 4; 5; 6 AND 7)</scope>
    <scope>SUBCELLULAR LOCATION</scope>
    <scope>TISSUE SPECIFICITY</scope>
    <source>
        <strain>Sprague-Dawley</strain>
        <tissue>Skeletal muscle</tissue>
    </source>
</reference>
<reference key="4">
    <citation type="journal article" date="2004" name="Proc. Natl. Acad. Sci. U.S.A.">
        <title>Nav1.5 E1053K mutation causing Brugada syndrome blocks binding to ankyrin-G and expression of Nav1.5 on the surface of cardiomyocytes.</title>
        <authorList>
            <person name="Mohler P.J."/>
            <person name="Rivolta I."/>
            <person name="Napolitano C."/>
            <person name="LeMaillet G."/>
            <person name="Lambert S."/>
            <person name="Priori S.G."/>
            <person name="Bennett V."/>
        </authorList>
    </citation>
    <scope>SUBCELLULAR LOCATION</scope>
</reference>
<reference key="5">
    <citation type="journal article" date="2011" name="Circ. Res.">
        <title>Interactions between ankyrin-G, Plakophilin-2, and Connexin43 at the cardiac intercalated disc.</title>
        <authorList>
            <person name="Sato P.Y."/>
            <person name="Coombs W."/>
            <person name="Lin X."/>
            <person name="Nekrasova O."/>
            <person name="Green K.J."/>
            <person name="Isom L.L."/>
            <person name="Taffet S.M."/>
            <person name="Delmar M."/>
        </authorList>
    </citation>
    <scope>FUNCTION</scope>
    <scope>INTERACTION WITH PKP2 AND GJA1</scope>
    <scope>TISSUE SPECIFICITY</scope>
</reference>
<reference key="6">
    <citation type="journal article" date="2011" name="Exp. Cell Res.">
        <title>Novel interactions of ankyrins-G at the costameres: the muscle-specific Obscurin/Titin-Binding-related Domain (OTBD) binds plectin and filamin C.</title>
        <authorList>
            <person name="Maiweilidan Y."/>
            <person name="Klauza I."/>
            <person name="Kordeli E."/>
        </authorList>
    </citation>
    <scope>INTERACTION WITH PLEC AND FLNC</scope>
    <scope>INTERACTION WITH PLEC AND FLNC (ISOFORM 7)</scope>
    <scope>SUBCELLULAR LOCATION</scope>
    <scope>TISSUE SPECIFICITY</scope>
</reference>
<reference key="7">
    <citation type="journal article" date="2012" name="Nat. Commun.">
        <title>Quantitative maps of protein phosphorylation sites across 14 different rat organs and tissues.</title>
        <authorList>
            <person name="Lundby A."/>
            <person name="Secher A."/>
            <person name="Lage K."/>
            <person name="Nordsborg N.B."/>
            <person name="Dmytriyev A."/>
            <person name="Lundby C."/>
            <person name="Olsen J.V."/>
        </authorList>
    </citation>
    <scope>PHOSPHORYLATION [LARGE SCALE ANALYSIS] AT SER-631; SER-855; SER-869; SER-875; SER-921; SER-924; SER-965; SER-967; SER-1121; SER-1458; SER-1984; SER-2102; SER-2114; SER-2117; SER-2457 AND SER-2544</scope>
    <scope>PHOSPHORYLATION [LARGE SCALE ANALYSIS] AT SER-1679 (ISOFORM 2)</scope>
    <scope>PHOSPHORYLATION [LARGE SCALE ANALYSIS] AT SER-851 (ISOFORMS 4 AND 5)</scope>
    <scope>IDENTIFICATION BY MASS SPECTROMETRY [LARGE SCALE ANALYSIS]</scope>
</reference>
<feature type="chain" id="PRO_0000429632" description="Ankyrin-3">
    <location>
        <begin position="1"/>
        <end position="2622"/>
    </location>
</feature>
<feature type="repeat" description="ANK 1">
    <location>
        <begin position="73"/>
        <end position="102"/>
    </location>
</feature>
<feature type="repeat" description="ANK 2">
    <location>
        <begin position="106"/>
        <end position="135"/>
    </location>
</feature>
<feature type="repeat" description="ANK 3">
    <location>
        <begin position="139"/>
        <end position="168"/>
    </location>
</feature>
<feature type="repeat" description="ANK 4">
    <location>
        <begin position="172"/>
        <end position="201"/>
    </location>
</feature>
<feature type="repeat" description="ANK 5">
    <location>
        <begin position="203"/>
        <end position="230"/>
    </location>
</feature>
<feature type="repeat" description="ANK 6">
    <location>
        <begin position="242"/>
        <end position="271"/>
    </location>
</feature>
<feature type="repeat" description="ANK 7">
    <location>
        <begin position="275"/>
        <end position="304"/>
    </location>
</feature>
<feature type="repeat" description="ANK 8">
    <location>
        <begin position="308"/>
        <end position="337"/>
    </location>
</feature>
<feature type="repeat" description="ANK 9">
    <location>
        <begin position="341"/>
        <end position="370"/>
    </location>
</feature>
<feature type="repeat" description="ANK 10">
    <location>
        <begin position="374"/>
        <end position="403"/>
    </location>
</feature>
<feature type="repeat" description="ANK 11">
    <location>
        <begin position="407"/>
        <end position="436"/>
    </location>
</feature>
<feature type="repeat" description="ANK 12">
    <location>
        <begin position="440"/>
        <end position="469"/>
    </location>
</feature>
<feature type="repeat" description="ANK 13">
    <location>
        <begin position="473"/>
        <end position="502"/>
    </location>
</feature>
<feature type="repeat" description="ANK 14">
    <location>
        <begin position="506"/>
        <end position="535"/>
    </location>
</feature>
<feature type="repeat" description="ANK 15">
    <location>
        <begin position="539"/>
        <end position="568"/>
    </location>
</feature>
<feature type="repeat" description="ANK 16">
    <location>
        <begin position="572"/>
        <end position="601"/>
    </location>
</feature>
<feature type="repeat" description="ANK 17">
    <location>
        <begin position="605"/>
        <end position="634"/>
    </location>
</feature>
<feature type="repeat" description="ANK 18">
    <location>
        <begin position="638"/>
        <end position="667"/>
    </location>
</feature>
<feature type="repeat" description="ANK 19">
    <location>
        <begin position="671"/>
        <end position="700"/>
    </location>
</feature>
<feature type="repeat" description="ANK 20">
    <location>
        <begin position="704"/>
        <end position="733"/>
    </location>
</feature>
<feature type="repeat" description="ANK 21">
    <location>
        <begin position="737"/>
        <end position="766"/>
    </location>
</feature>
<feature type="repeat" description="ANK 22">
    <location>
        <begin position="770"/>
        <end position="799"/>
    </location>
</feature>
<feature type="repeat" description="ANK 23">
    <location>
        <begin position="803"/>
        <end position="832"/>
    </location>
</feature>
<feature type="domain" description="ZU5 1" evidence="4">
    <location>
        <begin position="992"/>
        <end position="1147"/>
    </location>
</feature>
<feature type="domain" description="ZU5 2" evidence="4">
    <location>
        <begin position="1149"/>
        <end position="1296"/>
    </location>
</feature>
<feature type="domain" description="Death" evidence="3">
    <location>
        <begin position="2336"/>
        <end position="2420"/>
    </location>
</feature>
<feature type="region of interest" description="Disordered" evidence="5">
    <location>
        <begin position="1"/>
        <end position="44"/>
    </location>
</feature>
<feature type="region of interest" description="Disordered" evidence="5">
    <location>
        <begin position="868"/>
        <end position="889"/>
    </location>
</feature>
<feature type="region of interest" description="Disordered" evidence="5">
    <location>
        <begin position="1510"/>
        <end position="1539"/>
    </location>
</feature>
<feature type="region of interest" description="Disordered" evidence="5">
    <location>
        <begin position="1968"/>
        <end position="1992"/>
    </location>
</feature>
<feature type="region of interest" description="Disordered" evidence="5">
    <location>
        <begin position="2099"/>
        <end position="2147"/>
    </location>
</feature>
<feature type="region of interest" description="Disordered" evidence="5">
    <location>
        <begin position="2292"/>
        <end position="2312"/>
    </location>
</feature>
<feature type="region of interest" description="Disordered" evidence="5">
    <location>
        <begin position="2568"/>
        <end position="2622"/>
    </location>
</feature>
<feature type="compositionally biased region" description="Basic residues" evidence="5">
    <location>
        <begin position="25"/>
        <end position="38"/>
    </location>
</feature>
<feature type="compositionally biased region" description="Acidic residues" evidence="5">
    <location>
        <begin position="873"/>
        <end position="884"/>
    </location>
</feature>
<feature type="compositionally biased region" description="Low complexity" evidence="5">
    <location>
        <begin position="1515"/>
        <end position="1536"/>
    </location>
</feature>
<feature type="compositionally biased region" description="Basic and acidic residues" evidence="5">
    <location>
        <begin position="1977"/>
        <end position="1986"/>
    </location>
</feature>
<feature type="compositionally biased region" description="Basic and acidic residues" evidence="5">
    <location>
        <begin position="2106"/>
        <end position="2127"/>
    </location>
</feature>
<feature type="compositionally biased region" description="Polar residues" evidence="5">
    <location>
        <begin position="2128"/>
        <end position="2137"/>
    </location>
</feature>
<feature type="compositionally biased region" description="Basic and acidic residues" evidence="5">
    <location>
        <begin position="2594"/>
        <end position="2622"/>
    </location>
</feature>
<feature type="modified residue" description="Phosphoserine" evidence="2">
    <location>
        <position position="39"/>
    </location>
</feature>
<feature type="modified residue" description="Phosphoserine" evidence="15">
    <location>
        <position position="631"/>
    </location>
</feature>
<feature type="modified residue" description="Phosphoserine" evidence="15">
    <location>
        <position position="855"/>
    </location>
</feature>
<feature type="modified residue" description="Phosphoserine" evidence="15">
    <location>
        <position position="869"/>
    </location>
</feature>
<feature type="modified residue" description="Phosphoserine" evidence="15">
    <location>
        <position position="875"/>
    </location>
</feature>
<feature type="modified residue" description="Phosphoserine" evidence="15">
    <location>
        <position position="921"/>
    </location>
</feature>
<feature type="modified residue" description="Phosphoserine" evidence="15">
    <location>
        <position position="924"/>
    </location>
</feature>
<feature type="modified residue" description="Phosphoserine" evidence="1">
    <location>
        <position position="930"/>
    </location>
</feature>
<feature type="modified residue" description="Phosphoserine" evidence="15">
    <location>
        <position position="965"/>
    </location>
</feature>
<feature type="modified residue" description="Phosphoserine" evidence="15">
    <location>
        <position position="967"/>
    </location>
</feature>
<feature type="modified residue" description="Phosphoserine" evidence="15">
    <location>
        <position position="1121"/>
    </location>
</feature>
<feature type="modified residue" description="Phosphoserine" evidence="15">
    <location>
        <position position="1458"/>
    </location>
</feature>
<feature type="modified residue" description="Phosphoserine" evidence="1">
    <location>
        <position position="1469"/>
    </location>
</feature>
<feature type="modified residue" description="Phosphoserine" evidence="1">
    <location>
        <position position="1621"/>
    </location>
</feature>
<feature type="modified residue" description="Phosphoserine" evidence="1">
    <location>
        <position position="1624"/>
    </location>
</feature>
<feature type="modified residue" description="Phosphoserine" evidence="15">
    <location>
        <position position="1984"/>
    </location>
</feature>
<feature type="modified residue" description="Phosphoserine" evidence="15">
    <location>
        <position position="2102"/>
    </location>
</feature>
<feature type="modified residue" description="Phosphoserine" evidence="15">
    <location>
        <position position="2114"/>
    </location>
</feature>
<feature type="modified residue" description="Phosphoserine" evidence="15">
    <location>
        <position position="2117"/>
    </location>
</feature>
<feature type="modified residue" description="Phosphoserine" evidence="15">
    <location>
        <position position="2457"/>
    </location>
</feature>
<feature type="modified residue" description="Phosphoserine" evidence="2">
    <location>
        <position position="2475"/>
    </location>
</feature>
<feature type="modified residue" description="Phosphoserine" evidence="15">
    <location>
        <position position="2544"/>
    </location>
</feature>
<feature type="splice variant" id="VSP_055004" description="In isoform 4, isoform 5, isoform 6 and isoform 7." evidence="12 13">
    <original>MAHAASQLKKNRDLEINAEEETEKKKKHRKRSRDRKKKSDANASYLRAARAGHLEKALDYIKNGVDVNICNQNGLNALHLASKEGHVEVVSELLQREANVDAATKKGNTALHIASLAGQAEVVKVLVTNGANVNAQSQNGFTPLYMAAQENHLEVVRFLLDNGASQSLATEDGFTPLAVALQQGHDQVVSLLLENDTKGKVRLPALHIAARKDDTKAAALLLQNDTNADIESKMVVNRATESGFTPLHIAAHYGNINVATLLLNRAAAVDFTARNDITPLHVASKRGNANMVKLLLDRGAKIDAKTRDGLTPLHCGARSGHEQVVEMLLDRAAPILSKTKNGLSPLHMATQGDHLNCVQLLLQHNVPVDDVTNDYLTALHVAAHCGHYKVAKVLLDKKANPNAKALNGFTPLHIACKKNRIRVMELLLKHGASIQAVTESGLTPIHVAAFMGHVNIVSQLMHHGASPNTTNVRGETALHMAARSGQAEVVRYLVQDGAQVEAKAKDDQTPLHISARLGKADIVQQLLQQGASPNAATTSGYTPLHLSAREGHEDVAAFLLDHGASLSITTKKGFTPLHVAAKYGKLEVASLLLQKSASPDAAGKSGLTPLHVAAHYDNQKVALLLLDQGASPHAAAKNGYTPLHIAAKKNQMDIATSLLEYGADANAVTRQGIASVHLAAQEGHVDMVSLLLSRNANVNLSNKSGLTPLHLAAQEDRVNVAEVLVNQGAHVDAQTKMGYTPLHVGCHYGNIKIVNFLLQHSAKVNAKTKNGYTPLHQAAQQGHTHIINVLLQNNASPNELTVNGNTALAIARRLGYISVVDTLKVVTEEIMTTTTITEKHKMNVPETMNEVLDMSDDEVGKASAPEKLSDGEYISDGEEG</original>
    <variation>MALPHS</variation>
    <location>
        <begin position="1"/>
        <end position="880"/>
    </location>
</feature>
<feature type="splice variant" id="VSP_055005" description="In isoform 2 and isoform 3." evidence="13">
    <original>MAHAASQLKKNRDLEINAEEETEKKKKHRKRSRDRK</original>
    <variation>MSEEAKEKTAKPAHRKRKG</variation>
    <location>
        <begin position="1"/>
        <end position="36"/>
    </location>
</feature>
<feature type="splice variant" id="VSP_055006" description="In isoform 2 and isoform 3." evidence="13">
    <location>
        <begin position="234"/>
        <end position="241"/>
    </location>
</feature>
<feature type="splice variant" id="VSP_055007" description="In isoform 2 and isoform 3." evidence="13">
    <location>
        <begin position="858"/>
        <end position="878"/>
    </location>
</feature>
<feature type="splice variant" id="VSP_055008" description="In isoform 2, isoform 3, isoform 4, isoform 5, isoform 6 and isoform 7." evidence="12 13">
    <original>LRSFSS</original>
    <variation>PKISS</variation>
    <location>
        <begin position="922"/>
        <end position="927"/>
    </location>
</feature>
<feature type="splice variant" id="VSP_055009" description="In isoform 2, isoform 4 and isoform 5." evidence="13">
    <original>KRYSYLTEPSMKTVERSSGTARSLPTTYSHKPFFSTRPYQSWTTTPITVPGPAKSGSLSSSPSNTPSASPLKSIWSVSTPSPIKSTLGASTTSSVKSISDVASPIRSFRTISSPIRTVASPSPYNTQVASGTLGRVPTITEATPIKGVAPNSTLSSRTSPVTTAGSLLEKSSITMTPPASPKANITMYSSSLPFKSIITSAAPLISSPLKSVVSPTKSAADVISTAKAAMASTLSSPLKQMSGHAEVALVNGSVSPLKYPSSSALINGCKATATLQDKISTATNAVSSVVSAAPDTVEKALSTTTAMPFSPLRSYVSAAAPSAFQSLRAPSASALYNSLGPSVGVTTSSVTSSIITVPVYSVGNVLAEPALKKLPDSNSLTKSAAALLSPIKTLTTETRPQPHFNRTSSPVKSSLFLASSALKPSVPSSLSSSQEILKDVAEMKEDLMRMTAILQTDVPEEKPFQTDLPREGRIDDEEPFKIVEKVKEDLVKVSEILKKDVCVESKGPPKSPKSDKGHSPEDDWTEFSSEEIREARQAAASHAPSLPERVHGKANLTRVIDYLTNDIGSSSLTNLKYKFEEAKKEGEERQKRILKPAMALQEHKLKMPPASMRPSTSEKELCKMADSFFGTDAILESPDDFSQHDQDKSPLSDSGFETRSEKTPSAPQSAESTGPKPLFHEVPIPPVITETRTEVVHVIRSYEPSTGEIPQSQPEDPVSPKPPPTFMELEPKPTALSIKEKVKAFQMKASSEEEDHSRVLSKGMRVKEETHITTTTRMVYHSPPGSECASERIEETMSVHDIMKAFQSGRDPSKELAGLFEHKSAMSPDVAKSAAETSAQHAEKDNQMKPKLERIIEVHIEKGPQSPCERTDIRMAIVADHLGLSWTELARELNFSVDEINQIRVENPNSLISQSFMLLKKWVTRDGKNATTDALTSVLTKINRIDIVTLLEGPIFDYGNISGTRSFADENNVFHDPVD</original>
    <variation>PQSPCERTDIRMAIVADHLGLSWTELARELNFSVDEINQIRVENPNSLISQSFMLLKKWVTRDGKNATTDALTSVLTKINRIDIVTLLEGPIFDYGNISGTRSFADENNVFHDPVDGHPSFQVELETPMGLYCTPPTPFQQDDHFSDNSSIESPFRTPSRLSDGLMPSQGSIEHPAGGPPVVTAEDTSLEDSKMDDSVTVTETADPLDVDESQLKDLCQSECAHCWASVPGVPSGGPQAEPLRAQTRKVGVSSEQQEKGDSGPEEEMADDKVRSLFEDIQLEEVEAEEMTEDEGQAILNRVPRAELAMSSLA</variation>
    <location>
        <begin position="1466"/>
        <end position="2444"/>
    </location>
</feature>
<feature type="splice variant" id="VSP_055010" description="In isoform 3, isoform 6 and isoform 7." evidence="12 13">
    <location>
        <begin position="1466"/>
        <end position="2328"/>
    </location>
</feature>
<feature type="splice variant" id="VSP_055011" description="In isoform 2, isoform 5 and isoform 7." evidence="12 13">
    <original>K</original>
    <variation>KDLRHSESDSSSEEERRVTTRVIRRRVIIKGEEAKTIPGESVTEEQFTDEEGNLITRKITRKVIRRIGPQERKQDDV</variation>
    <location>
        <position position="2601"/>
    </location>
</feature>
<feature type="splice variant" id="VSP_055012" description="In isoform 3." evidence="13">
    <original>K</original>
    <variation>KQVKSPGEAFTRMTACCYKDLRHSESDSSSEEERRVTTRVIRRRVIIKGEEAKTIPGESVTEEQFTDEEGNLITRKITRKVIRRIGPQERKQDDV</variation>
    <location>
        <position position="2601"/>
    </location>
</feature>
<feature type="splice variant" id="VSP_055013" description="In isoform 4 and isoform 6." evidence="13">
    <original>K</original>
    <variation>KVKSPGEAFTRMTACCYKDLRHSESDSSSEEERRVTTRVIRRRVIIKGEEAKTIPGESVTEEQFTDEEGNLITRKITRKVIRRIGPQERKQDDV</variation>
    <location>
        <position position="2601"/>
    </location>
</feature>
<feature type="sequence conflict" description="In Ref. 1; AAC78143." evidence="14" ref="1">
    <original>P</original>
    <variation>S</variation>
    <location>
        <position position="246"/>
    </location>
</feature>
<feature type="sequence conflict" description="In Ref. 3; CAH19223/CAH19224." evidence="14" ref="3">
    <original>A</original>
    <variation>S</variation>
    <location>
        <position position="635"/>
    </location>
</feature>
<feature type="sequence conflict" description="In Ref. 1; AAC78143." evidence="14" ref="1">
    <original>A</original>
    <variation>P</variation>
    <location>
        <position position="667"/>
    </location>
</feature>
<feature type="helix" evidence="19">
    <location>
        <begin position="279"/>
        <end position="286"/>
    </location>
</feature>
<feature type="helix" evidence="19">
    <location>
        <begin position="289"/>
        <end position="297"/>
    </location>
</feature>
<feature type="helix" evidence="19">
    <location>
        <begin position="312"/>
        <end position="318"/>
    </location>
</feature>
<feature type="helix" evidence="19">
    <location>
        <begin position="322"/>
        <end position="330"/>
    </location>
</feature>
<feature type="helix" evidence="19">
    <location>
        <begin position="345"/>
        <end position="351"/>
    </location>
</feature>
<feature type="helix" evidence="19">
    <location>
        <begin position="355"/>
        <end position="363"/>
    </location>
</feature>
<feature type="helix" evidence="19">
    <location>
        <begin position="378"/>
        <end position="385"/>
    </location>
</feature>
<feature type="helix" evidence="19">
    <location>
        <begin position="388"/>
        <end position="396"/>
    </location>
</feature>
<feature type="helix" evidence="19">
    <location>
        <begin position="411"/>
        <end position="417"/>
    </location>
</feature>
<feature type="helix" evidence="19">
    <location>
        <begin position="421"/>
        <end position="429"/>
    </location>
</feature>
<feature type="helix" evidence="19">
    <location>
        <begin position="444"/>
        <end position="451"/>
    </location>
</feature>
<feature type="helix" evidence="19">
    <location>
        <begin position="454"/>
        <end position="462"/>
    </location>
</feature>
<feature type="helix" evidence="19">
    <location>
        <begin position="477"/>
        <end position="484"/>
    </location>
</feature>
<feature type="helix" evidence="19">
    <location>
        <begin position="487"/>
        <end position="495"/>
    </location>
</feature>
<feature type="strand" evidence="18">
    <location>
        <begin position="988"/>
        <end position="998"/>
    </location>
</feature>
<feature type="strand" evidence="18">
    <location>
        <begin position="1003"/>
        <end position="1010"/>
    </location>
</feature>
<feature type="strand" evidence="18">
    <location>
        <begin position="1014"/>
        <end position="1017"/>
    </location>
</feature>
<feature type="strand" evidence="18">
    <location>
        <begin position="1022"/>
        <end position="1024"/>
    </location>
</feature>
<feature type="strand" evidence="18">
    <location>
        <begin position="1026"/>
        <end position="1032"/>
    </location>
</feature>
<feature type="strand" evidence="18">
    <location>
        <begin position="1049"/>
        <end position="1059"/>
    </location>
</feature>
<feature type="strand" evidence="18">
    <location>
        <begin position="1063"/>
        <end position="1073"/>
    </location>
</feature>
<feature type="turn" evidence="18">
    <location>
        <begin position="1079"/>
        <end position="1082"/>
    </location>
</feature>
<feature type="strand" evidence="18">
    <location>
        <begin position="1083"/>
        <end position="1094"/>
    </location>
</feature>
<feature type="strand" evidence="18">
    <location>
        <begin position="1096"/>
        <end position="1098"/>
    </location>
</feature>
<feature type="helix" evidence="18">
    <location>
        <begin position="1106"/>
        <end position="1110"/>
    </location>
</feature>
<feature type="helix" evidence="18">
    <location>
        <begin position="1122"/>
        <end position="1128"/>
    </location>
</feature>
<feature type="strand" evidence="18">
    <location>
        <begin position="1130"/>
        <end position="1137"/>
    </location>
</feature>
<feature type="strand" evidence="18">
    <location>
        <begin position="1140"/>
        <end position="1148"/>
    </location>
</feature>
<feature type="strand" evidence="18">
    <location>
        <begin position="1151"/>
        <end position="1153"/>
    </location>
</feature>
<feature type="strand" evidence="18">
    <location>
        <begin position="1165"/>
        <end position="1169"/>
    </location>
</feature>
<feature type="strand" evidence="18">
    <location>
        <begin position="1171"/>
        <end position="1173"/>
    </location>
</feature>
<feature type="strand" evidence="18">
    <location>
        <begin position="1185"/>
        <end position="1190"/>
    </location>
</feature>
<feature type="helix" evidence="18">
    <location>
        <begin position="1194"/>
        <end position="1199"/>
    </location>
</feature>
<feature type="strand" evidence="18">
    <location>
        <begin position="1210"/>
        <end position="1215"/>
    </location>
</feature>
<feature type="strand" evidence="18">
    <location>
        <begin position="1217"/>
        <end position="1229"/>
    </location>
</feature>
<feature type="strand" evidence="18">
    <location>
        <begin position="1250"/>
        <end position="1255"/>
    </location>
</feature>
<feature type="helix" evidence="18">
    <location>
        <begin position="1269"/>
        <end position="1271"/>
    </location>
</feature>
<feature type="strand" evidence="18">
    <location>
        <begin position="1277"/>
        <end position="1287"/>
    </location>
</feature>
<feature type="strand" evidence="18">
    <location>
        <begin position="1290"/>
        <end position="1295"/>
    </location>
</feature>
<feature type="turn" evidence="18">
    <location>
        <begin position="1299"/>
        <end position="1301"/>
    </location>
</feature>
<feature type="helix" evidence="18">
    <location>
        <begin position="1302"/>
        <end position="1313"/>
    </location>
</feature>
<feature type="strand" evidence="18">
    <location>
        <begin position="1317"/>
        <end position="1326"/>
    </location>
</feature>
<feature type="strand" evidence="18">
    <location>
        <begin position="1336"/>
        <end position="1343"/>
    </location>
</feature>
<feature type="helix" evidence="18">
    <location>
        <begin position="1349"/>
        <end position="1353"/>
    </location>
</feature>
<feature type="strand" evidence="18">
    <location>
        <begin position="1357"/>
        <end position="1360"/>
    </location>
</feature>
<feature type="strand" evidence="18">
    <location>
        <begin position="1365"/>
        <end position="1368"/>
    </location>
</feature>
<feature type="strand" evidence="18">
    <location>
        <begin position="1371"/>
        <end position="1380"/>
    </location>
</feature>
<feature type="strand" evidence="18">
    <location>
        <begin position="1392"/>
        <end position="1394"/>
    </location>
</feature>
<feature type="strand" evidence="18">
    <location>
        <begin position="1401"/>
        <end position="1405"/>
    </location>
</feature>
<feature type="strand" evidence="18">
    <location>
        <begin position="1418"/>
        <end position="1424"/>
    </location>
</feature>
<feature type="strand" evidence="18">
    <location>
        <begin position="1437"/>
        <end position="1442"/>
    </location>
</feature>
<feature type="strand" evidence="17">
    <location>
        <begin position="1989"/>
        <end position="1991"/>
    </location>
</feature>
<feature type="helix" evidence="16">
    <location>
        <begin position="1994"/>
        <end position="2003"/>
    </location>
</feature>
<feature type="modified residue" description="Phosphoserine" evidence="15">
    <location sequence="O70511-2">
        <position position="1679"/>
    </location>
</feature>
<feature type="modified residue" description="Phosphoserine" evidence="15">
    <location sequence="O70511-4">
        <position position="851"/>
    </location>
</feature>
<feature type="modified residue" description="Phosphoserine" evidence="15">
    <location sequence="O70511-5">
        <position position="851"/>
    </location>
</feature>
<organism>
    <name type="scientific">Rattus norvegicus</name>
    <name type="common">Rat</name>
    <dbReference type="NCBI Taxonomy" id="10116"/>
    <lineage>
        <taxon>Eukaryota</taxon>
        <taxon>Metazoa</taxon>
        <taxon>Chordata</taxon>
        <taxon>Craniata</taxon>
        <taxon>Vertebrata</taxon>
        <taxon>Euteleostomi</taxon>
        <taxon>Mammalia</taxon>
        <taxon>Eutheria</taxon>
        <taxon>Euarchontoglires</taxon>
        <taxon>Glires</taxon>
        <taxon>Rodentia</taxon>
        <taxon>Myomorpha</taxon>
        <taxon>Muroidea</taxon>
        <taxon>Muridae</taxon>
        <taxon>Murinae</taxon>
        <taxon>Rattus</taxon>
    </lineage>
</organism>
<proteinExistence type="evidence at protein level"/>
<sequence>MAHAASQLKKNRDLEINAEEETEKKKKHRKRSRDRKKKSDANASYLRAARAGHLEKALDYIKNGVDVNICNQNGLNALHLASKEGHVEVVSELLQREANVDAATKKGNTALHIASLAGQAEVVKVLVTNGANVNAQSQNGFTPLYMAAQENHLEVVRFLLDNGASQSLATEDGFTPLAVALQQGHDQVVSLLLENDTKGKVRLPALHIAARKDDTKAAALLLQNDTNADIESKMVVNRATESGFTPLHIAAHYGNINVATLLLNRAAAVDFTARNDITPLHVASKRGNANMVKLLLDRGAKIDAKTRDGLTPLHCGARSGHEQVVEMLLDRAAPILSKTKNGLSPLHMATQGDHLNCVQLLLQHNVPVDDVTNDYLTALHVAAHCGHYKVAKVLLDKKANPNAKALNGFTPLHIACKKNRIRVMELLLKHGASIQAVTESGLTPIHVAAFMGHVNIVSQLMHHGASPNTTNVRGETALHMAARSGQAEVVRYLVQDGAQVEAKAKDDQTPLHISARLGKADIVQQLLQQGASPNAATTSGYTPLHLSAREGHEDVAAFLLDHGASLSITTKKGFTPLHVAAKYGKLEVASLLLQKSASPDAAGKSGLTPLHVAAHYDNQKVALLLLDQGASPHAAAKNGYTPLHIAAKKNQMDIATSLLEYGADANAVTRQGIASVHLAAQEGHVDMVSLLLSRNANVNLSNKSGLTPLHLAAQEDRVNVAEVLVNQGAHVDAQTKMGYTPLHVGCHYGNIKIVNFLLQHSAKVNAKTKNGYTPLHQAAQQGHTHIINVLLQNNASPNELTVNGNTALAIARRLGYISVVDTLKVVTEEIMTTTTITEKHKMNVPETMNEVLDMSDDEVGKASAPEKLSDGEYISDGEEGEDAITGDTDKYLGPQDLKELGDDSLPAEGYVGFSLGARSASLRSFSSDRSYTLNRSSYARDSMMIEELLVPSKEQHLPFTREFDSDSLRHYSWAADTLDNVNLVSSPVHSGFLVSFMVDARGGSMRGSRHHGMRIIIPPRKCTAPTRITCRLVKRHKLANPPPMVEGEGLASRLVEMGPAGAQFLGPVIVEIPHFGSMRGKERELIVLRSENGETWKEHQFDSKNEDLSELLNGMDEELDSPEELGTKRICRIITKDFPQYFAVVSRIKQESNQIGPEGGILSSTTVPLVQASFPEGALTKRIRVGLQAQPVPEETVKKILGNKATFSPIVTVEPRRRKFHKPITMTIPVPPPSGEGVSNGYKGDTTPSLRLLCSITGGTSPAQWEDITGTTPLTFIKDCVSFTTNVSARFWLADCHQVLETVGLASQLYRELICVPYMAKFVVFAKTNDPVESSLRCFCMTDDRVDKTLEQQENFEEVARSKDIEVLEGKPIYVDCYGNLAPLTKGGQQLVFNFYSFKENRLPFSIKVRDTSQEPCGRLSFLKEPKTTKGLPQTAVCNLNITLPAHKKAEKADRRQSFTSLALRKRYSYLTEPSMKTVERSSGTARSLPTTYSHKPFFSTRPYQSWTTTPITVPGPAKSGSLSSSPSNTPSASPLKSIWSVSTPSPIKSTLGASTTSSVKSISDVASPIRSFRTISSPIRTVASPSPYNTQVASGTLGRVPTITEATPIKGVAPNSTLSSRTSPVTTAGSLLEKSSITMTPPASPKANITMYSSSLPFKSIITSAAPLISSPLKSVVSPTKSAADVISTAKAAMASTLSSPLKQMSGHAEVALVNGSVSPLKYPSSSALINGCKATATLQDKISTATNAVSSVVSAAPDTVEKALSTTTAMPFSPLRSYVSAAAPSAFQSLRAPSASALYNSLGPSVGVTTSSVTSSIITVPVYSVGNVLAEPALKKLPDSNSLTKSAAALLSPIKTLTTETRPQPHFNRTSSPVKSSLFLASSALKPSVPSSLSSSQEILKDVAEMKEDLMRMTAILQTDVPEEKPFQTDLPREGRIDDEEPFKIVEKVKEDLVKVSEILKKDVCVESKGPPKSPKSDKGHSPEDDWTEFSSEEIREARQAAASHAPSLPERVHGKANLTRVIDYLTNDIGSSSLTNLKYKFEEAKKEGEERQKRILKPAMALQEHKLKMPPASMRPSTSEKELCKMADSFFGTDAILESPDDFSQHDQDKSPLSDSGFETRSEKTPSAPQSAESTGPKPLFHEVPIPPVITETRTEVVHVIRSYEPSTGEIPQSQPEDPVSPKPPPTFMELEPKPTALSIKEKVKAFQMKASSEEEDHSRVLSKGMRVKEETHITTTTRMVYHSPPGSECASERIEETMSVHDIMKAFQSGRDPSKELAGLFEHKSAMSPDVAKSAAETSAQHAEKDNQMKPKLERIIEVHIEKGPQSPCERTDIRMAIVADHLGLSWTELARELNFSVDEINQIRVENPNSLISQSFMLLKKWVTRDGKNATTDALTSVLTKINRIDIVTLLEGPIFDYGNISGTRSFADENNVFHDPVDGWQNETPSGSLESPAQARRITGGLLDRLDDSSDQVRDPITSYLTGEAGKFEANGNHAEVIPEAKAKAYFPESQNDIGKQSIKENLKPKTHGCGRAEEPVSPLTAYQKSLEETSKLVIEDAPKPCVPVGMKKMTRTPADGKARLNLQEEEGSARSEPKQGEGYKVKTKKEIRNVEKKAH</sequence>
<gene>
    <name type="primary">Ank3</name>
</gene>
<dbReference type="EMBL" id="AF102552">
    <property type="protein sequence ID" value="AAC78143.1"/>
    <property type="molecule type" value="mRNA"/>
</dbReference>
<dbReference type="EMBL" id="AJ428573">
    <property type="protein sequence ID" value="CAD21705.1"/>
    <property type="molecule type" value="mRNA"/>
</dbReference>
<dbReference type="EMBL" id="AJ812019">
    <property type="protein sequence ID" value="CAH19219.1"/>
    <property type="molecule type" value="mRNA"/>
</dbReference>
<dbReference type="EMBL" id="AJ812021">
    <property type="protein sequence ID" value="CAH19221.1"/>
    <property type="molecule type" value="mRNA"/>
</dbReference>
<dbReference type="EMBL" id="AJ812022">
    <property type="protein sequence ID" value="CAH19222.1"/>
    <property type="molecule type" value="mRNA"/>
</dbReference>
<dbReference type="EMBL" id="AJ812023">
    <property type="protein sequence ID" value="CAH19223.1"/>
    <property type="molecule type" value="mRNA"/>
</dbReference>
<dbReference type="EMBL" id="AJ812024">
    <property type="protein sequence ID" value="CAH19224.1"/>
    <property type="molecule type" value="mRNA"/>
</dbReference>
<dbReference type="RefSeq" id="NP_001029156.1">
    <molecule id="O70511-1"/>
    <property type="nucleotide sequence ID" value="NM_001033984.1"/>
</dbReference>
<dbReference type="RefSeq" id="NP_113993.1">
    <molecule id="O70511-2"/>
    <property type="nucleotide sequence ID" value="NM_031805.2"/>
</dbReference>
<dbReference type="PDB" id="5YIP">
    <property type="method" value="X-ray"/>
    <property type="resolution" value="1.85 A"/>
    <property type="chains" value="B=1985-2010"/>
</dbReference>
<dbReference type="PDB" id="5YIQ">
    <property type="method" value="X-ray"/>
    <property type="resolution" value="2.60 A"/>
    <property type="chains" value="D=1985-2010"/>
</dbReference>
<dbReference type="PDB" id="6A9X">
    <property type="method" value="X-ray"/>
    <property type="resolution" value="2.20 A"/>
    <property type="chains" value="A=1987-2010"/>
</dbReference>
<dbReference type="PDB" id="6M3P">
    <property type="method" value="X-ray"/>
    <property type="resolution" value="3.31 A"/>
    <property type="chains" value="C/E=975-1465"/>
</dbReference>
<dbReference type="PDB" id="6M3R">
    <property type="method" value="X-ray"/>
    <property type="resolution" value="4.31 A"/>
    <property type="chains" value="E=975-1465"/>
</dbReference>
<dbReference type="PDB" id="7XCE">
    <property type="method" value="X-ray"/>
    <property type="resolution" value="2.50 A"/>
    <property type="chains" value="A=275-500"/>
</dbReference>
<dbReference type="PDBsum" id="5YIP"/>
<dbReference type="PDBsum" id="5YIQ"/>
<dbReference type="PDBsum" id="6A9X"/>
<dbReference type="PDBsum" id="6M3P"/>
<dbReference type="PDBsum" id="6M3R"/>
<dbReference type="PDBsum" id="7XCE"/>
<dbReference type="SMR" id="O70511"/>
<dbReference type="BioGRID" id="262995">
    <property type="interactions" value="9"/>
</dbReference>
<dbReference type="CORUM" id="O70511"/>
<dbReference type="DIP" id="DIP-60342N"/>
<dbReference type="FunCoup" id="O70511">
    <property type="interactions" value="1911"/>
</dbReference>
<dbReference type="IntAct" id="O70511">
    <property type="interactions" value="9"/>
</dbReference>
<dbReference type="MINT" id="O70511"/>
<dbReference type="STRING" id="10116.ENSRNOP00000071472"/>
<dbReference type="GlyGen" id="O70511">
    <property type="glycosylation" value="8 sites, 1 O-linked glycan (8 sites)"/>
</dbReference>
<dbReference type="iPTMnet" id="O70511"/>
<dbReference type="PhosphoSitePlus" id="O70511"/>
<dbReference type="SwissPalm" id="O70511"/>
<dbReference type="PaxDb" id="10116-ENSRNOP00000043687"/>
<dbReference type="ABCD" id="O70511">
    <property type="antibodies" value="6 sequenced antibodies"/>
</dbReference>
<dbReference type="Ensembl" id="ENSRNOT00000085985.2">
    <molecule id="O70511-3"/>
    <property type="protein sequence ID" value="ENSRNOP00000072993.2"/>
    <property type="gene ID" value="ENSRNOG00000053288.2"/>
</dbReference>
<dbReference type="Ensembl" id="ENSRNOT00000090273.2">
    <molecule id="O70511-2"/>
    <property type="protein sequence ID" value="ENSRNOP00000071942.2"/>
    <property type="gene ID" value="ENSRNOG00000053288.2"/>
</dbReference>
<dbReference type="GeneID" id="361833"/>
<dbReference type="KEGG" id="rno:361833"/>
<dbReference type="UCSC" id="RGD:620157">
    <property type="organism name" value="rat"/>
</dbReference>
<dbReference type="AGR" id="RGD:620157"/>
<dbReference type="CTD" id="288"/>
<dbReference type="RGD" id="620157">
    <property type="gene designation" value="Ank3"/>
</dbReference>
<dbReference type="eggNOG" id="KOG4177">
    <property type="taxonomic scope" value="Eukaryota"/>
</dbReference>
<dbReference type="GeneTree" id="ENSGT00940000154939"/>
<dbReference type="InParanoid" id="O70511"/>
<dbReference type="PRO" id="PR:O70511"/>
<dbReference type="Proteomes" id="UP000002494">
    <property type="component" value="Chromosome 20"/>
</dbReference>
<dbReference type="GO" id="GO:0030424">
    <property type="term" value="C:axon"/>
    <property type="evidence" value="ECO:0000314"/>
    <property type="project" value="RGD"/>
</dbReference>
<dbReference type="GO" id="GO:1904115">
    <property type="term" value="C:axon cytoplasm"/>
    <property type="evidence" value="ECO:0007669"/>
    <property type="project" value="GOC"/>
</dbReference>
<dbReference type="GO" id="GO:0043194">
    <property type="term" value="C:axon initial segment"/>
    <property type="evidence" value="ECO:0000314"/>
    <property type="project" value="BHF-UCL"/>
</dbReference>
<dbReference type="GO" id="GO:0009925">
    <property type="term" value="C:basal plasma membrane"/>
    <property type="evidence" value="ECO:0000266"/>
    <property type="project" value="RGD"/>
</dbReference>
<dbReference type="GO" id="GO:0016323">
    <property type="term" value="C:basolateral plasma membrane"/>
    <property type="evidence" value="ECO:0000266"/>
    <property type="project" value="RGD"/>
</dbReference>
<dbReference type="GO" id="GO:0005923">
    <property type="term" value="C:bicellular tight junction"/>
    <property type="evidence" value="ECO:0000266"/>
    <property type="project" value="RGD"/>
</dbReference>
<dbReference type="GO" id="GO:0009986">
    <property type="term" value="C:cell surface"/>
    <property type="evidence" value="ECO:0000314"/>
    <property type="project" value="BHF-UCL"/>
</dbReference>
<dbReference type="GO" id="GO:0043034">
    <property type="term" value="C:costamere"/>
    <property type="evidence" value="ECO:0000314"/>
    <property type="project" value="RGD"/>
</dbReference>
<dbReference type="GO" id="GO:0005856">
    <property type="term" value="C:cytoskeleton"/>
    <property type="evidence" value="ECO:0000318"/>
    <property type="project" value="GO_Central"/>
</dbReference>
<dbReference type="GO" id="GO:0030425">
    <property type="term" value="C:dendrite"/>
    <property type="evidence" value="ECO:0000314"/>
    <property type="project" value="RGD"/>
</dbReference>
<dbReference type="GO" id="GO:0098978">
    <property type="term" value="C:glutamatergic synapse"/>
    <property type="evidence" value="ECO:0000314"/>
    <property type="project" value="SynGO"/>
</dbReference>
<dbReference type="GO" id="GO:0014704">
    <property type="term" value="C:intercalated disc"/>
    <property type="evidence" value="ECO:0000314"/>
    <property type="project" value="BHF-UCL"/>
</dbReference>
<dbReference type="GO" id="GO:0016328">
    <property type="term" value="C:lateral plasma membrane"/>
    <property type="evidence" value="ECO:0000266"/>
    <property type="project" value="RGD"/>
</dbReference>
<dbReference type="GO" id="GO:0005764">
    <property type="term" value="C:lysosome"/>
    <property type="evidence" value="ECO:0007669"/>
    <property type="project" value="UniProtKB-SubCell"/>
</dbReference>
<dbReference type="GO" id="GO:0016020">
    <property type="term" value="C:membrane"/>
    <property type="evidence" value="ECO:0000266"/>
    <property type="project" value="RGD"/>
</dbReference>
<dbReference type="GO" id="GO:0031594">
    <property type="term" value="C:neuromuscular junction"/>
    <property type="evidence" value="ECO:0000314"/>
    <property type="project" value="RGD"/>
</dbReference>
<dbReference type="GO" id="GO:0043005">
    <property type="term" value="C:neuron projection"/>
    <property type="evidence" value="ECO:0000318"/>
    <property type="project" value="GO_Central"/>
</dbReference>
<dbReference type="GO" id="GO:0033268">
    <property type="term" value="C:node of Ranvier"/>
    <property type="evidence" value="ECO:0000314"/>
    <property type="project" value="ARUK-UCL"/>
</dbReference>
<dbReference type="GO" id="GO:0005634">
    <property type="term" value="C:nucleus"/>
    <property type="evidence" value="ECO:0000318"/>
    <property type="project" value="GO_Central"/>
</dbReference>
<dbReference type="GO" id="GO:0033270">
    <property type="term" value="C:paranode region of axon"/>
    <property type="evidence" value="ECO:0000266"/>
    <property type="project" value="RGD"/>
</dbReference>
<dbReference type="GO" id="GO:0005886">
    <property type="term" value="C:plasma membrane"/>
    <property type="evidence" value="ECO:0000314"/>
    <property type="project" value="BHF-UCL"/>
</dbReference>
<dbReference type="GO" id="GO:0098794">
    <property type="term" value="C:postsynapse"/>
    <property type="evidence" value="ECO:0000314"/>
    <property type="project" value="SynGO"/>
</dbReference>
<dbReference type="GO" id="GO:0014069">
    <property type="term" value="C:postsynaptic density"/>
    <property type="evidence" value="ECO:0000266"/>
    <property type="project" value="RGD"/>
</dbReference>
<dbReference type="GO" id="GO:0045211">
    <property type="term" value="C:postsynaptic membrane"/>
    <property type="evidence" value="ECO:0000314"/>
    <property type="project" value="RGD"/>
</dbReference>
<dbReference type="GO" id="GO:0042383">
    <property type="term" value="C:sarcolemma"/>
    <property type="evidence" value="ECO:0000314"/>
    <property type="project" value="BHF-UCL"/>
</dbReference>
<dbReference type="GO" id="GO:0016529">
    <property type="term" value="C:sarcoplasmic reticulum"/>
    <property type="evidence" value="ECO:0000314"/>
    <property type="project" value="RGD"/>
</dbReference>
<dbReference type="GO" id="GO:0014731">
    <property type="term" value="C:spectrin-associated cytoskeleton"/>
    <property type="evidence" value="ECO:0000314"/>
    <property type="project" value="BHF-UCL"/>
</dbReference>
<dbReference type="GO" id="GO:0045202">
    <property type="term" value="C:synapse"/>
    <property type="evidence" value="ECO:0000266"/>
    <property type="project" value="RGD"/>
</dbReference>
<dbReference type="GO" id="GO:0030315">
    <property type="term" value="C:T-tubule"/>
    <property type="evidence" value="ECO:0000314"/>
    <property type="project" value="BHF-UCL"/>
</dbReference>
<dbReference type="GO" id="GO:0030018">
    <property type="term" value="C:Z disc"/>
    <property type="evidence" value="ECO:0000314"/>
    <property type="project" value="RGD"/>
</dbReference>
<dbReference type="GO" id="GO:0045296">
    <property type="term" value="F:cadherin binding"/>
    <property type="evidence" value="ECO:0000353"/>
    <property type="project" value="BHF-UCL"/>
</dbReference>
<dbReference type="GO" id="GO:0099103">
    <property type="term" value="F:channel activator activity"/>
    <property type="evidence" value="ECO:0000314"/>
    <property type="project" value="BHF-UCL"/>
</dbReference>
<dbReference type="GO" id="GO:0008092">
    <property type="term" value="F:cytoskeletal protein binding"/>
    <property type="evidence" value="ECO:0000353"/>
    <property type="project" value="BHF-UCL"/>
</dbReference>
<dbReference type="GO" id="GO:0140031">
    <property type="term" value="F:phosphorylation-dependent protein binding"/>
    <property type="evidence" value="ECO:0000353"/>
    <property type="project" value="UniProtKB"/>
</dbReference>
<dbReference type="GO" id="GO:0030674">
    <property type="term" value="F:protein-macromolecule adaptor activity"/>
    <property type="evidence" value="ECO:0000314"/>
    <property type="project" value="BHF-UCL"/>
</dbReference>
<dbReference type="GO" id="GO:0061629">
    <property type="term" value="F:RNA polymerase II-specific DNA-binding transcription factor binding"/>
    <property type="evidence" value="ECO:0000318"/>
    <property type="project" value="GO_Central"/>
</dbReference>
<dbReference type="GO" id="GO:0017080">
    <property type="term" value="F:sodium channel regulator activity"/>
    <property type="evidence" value="ECO:0000314"/>
    <property type="project" value="BHF-UCL"/>
</dbReference>
<dbReference type="GO" id="GO:0030507">
    <property type="term" value="F:spectrin binding"/>
    <property type="evidence" value="ECO:0000314"/>
    <property type="project" value="BHF-UCL"/>
</dbReference>
<dbReference type="GO" id="GO:0005200">
    <property type="term" value="F:structural constituent of cytoskeleton"/>
    <property type="evidence" value="ECO:0000266"/>
    <property type="project" value="RGD"/>
</dbReference>
<dbReference type="GO" id="GO:0044325">
    <property type="term" value="F:transmembrane transporter binding"/>
    <property type="evidence" value="ECO:0000353"/>
    <property type="project" value="BHF-UCL"/>
</dbReference>
<dbReference type="GO" id="GO:0008089">
    <property type="term" value="P:anterograde axonal transport"/>
    <property type="evidence" value="ECO:0000315"/>
    <property type="project" value="RGD"/>
</dbReference>
<dbReference type="GO" id="GO:0061564">
    <property type="term" value="P:axon development"/>
    <property type="evidence" value="ECO:0000315"/>
    <property type="project" value="RGD"/>
</dbReference>
<dbReference type="GO" id="GO:0007411">
    <property type="term" value="P:axon guidance"/>
    <property type="evidence" value="ECO:0000266"/>
    <property type="project" value="RGD"/>
</dbReference>
<dbReference type="GO" id="GO:0007409">
    <property type="term" value="P:axonogenesis"/>
    <property type="evidence" value="ECO:0000266"/>
    <property type="project" value="RGD"/>
</dbReference>
<dbReference type="GO" id="GO:0071286">
    <property type="term" value="P:cellular response to magnesium ion"/>
    <property type="evidence" value="ECO:0000250"/>
    <property type="project" value="UniProtKB"/>
</dbReference>
<dbReference type="GO" id="GO:0045162">
    <property type="term" value="P:clustering of voltage-gated sodium channels"/>
    <property type="evidence" value="ECO:0000315"/>
    <property type="project" value="RGD"/>
</dbReference>
<dbReference type="GO" id="GO:0045184">
    <property type="term" value="P:establishment of protein localization"/>
    <property type="evidence" value="ECO:0000266"/>
    <property type="project" value="RGD"/>
</dbReference>
<dbReference type="GO" id="GO:0030951">
    <property type="term" value="P:establishment or maintenance of microtubule cytoskeleton polarity"/>
    <property type="evidence" value="ECO:0000315"/>
    <property type="project" value="RGD"/>
</dbReference>
<dbReference type="GO" id="GO:0043001">
    <property type="term" value="P:Golgi to plasma membrane protein transport"/>
    <property type="evidence" value="ECO:0000266"/>
    <property type="project" value="RGD"/>
</dbReference>
<dbReference type="GO" id="GO:0010960">
    <property type="term" value="P:magnesium ion homeostasis"/>
    <property type="evidence" value="ECO:0000250"/>
    <property type="project" value="UniProtKB"/>
</dbReference>
<dbReference type="GO" id="GO:0032507">
    <property type="term" value="P:maintenance of protein location in cell"/>
    <property type="evidence" value="ECO:0000315"/>
    <property type="project" value="RGD"/>
</dbReference>
<dbReference type="GO" id="GO:0072660">
    <property type="term" value="P:maintenance of protein location in plasma membrane"/>
    <property type="evidence" value="ECO:0000266"/>
    <property type="project" value="RGD"/>
</dbReference>
<dbReference type="GO" id="GO:0071709">
    <property type="term" value="P:membrane assembly"/>
    <property type="evidence" value="ECO:0000316"/>
    <property type="project" value="BHF-UCL"/>
</dbReference>
<dbReference type="GO" id="GO:0000281">
    <property type="term" value="P:mitotic cytokinesis"/>
    <property type="evidence" value="ECO:0000266"/>
    <property type="project" value="RGD"/>
</dbReference>
<dbReference type="GO" id="GO:1902260">
    <property type="term" value="P:negative regulation of delayed rectifier potassium channel activity"/>
    <property type="evidence" value="ECO:0000250"/>
    <property type="project" value="UniProtKB"/>
</dbReference>
<dbReference type="GO" id="GO:0045806">
    <property type="term" value="P:negative regulation of endocytosis"/>
    <property type="evidence" value="ECO:0000315"/>
    <property type="project" value="RGD"/>
</dbReference>
<dbReference type="GO" id="GO:0007528">
    <property type="term" value="P:neuromuscular junction development"/>
    <property type="evidence" value="ECO:0000270"/>
    <property type="project" value="RGD"/>
</dbReference>
<dbReference type="GO" id="GO:0019228">
    <property type="term" value="P:neuronal action potential"/>
    <property type="evidence" value="ECO:0000266"/>
    <property type="project" value="RGD"/>
</dbReference>
<dbReference type="GO" id="GO:0007009">
    <property type="term" value="P:plasma membrane organization"/>
    <property type="evidence" value="ECO:0000266"/>
    <property type="project" value="RGD"/>
</dbReference>
<dbReference type="GO" id="GO:0010650">
    <property type="term" value="P:positive regulation of cell communication by electrical coupling"/>
    <property type="evidence" value="ECO:0000315"/>
    <property type="project" value="RGD"/>
</dbReference>
<dbReference type="GO" id="GO:0010628">
    <property type="term" value="P:positive regulation of gene expression"/>
    <property type="evidence" value="ECO:0000315"/>
    <property type="project" value="BHF-UCL"/>
</dbReference>
<dbReference type="GO" id="GO:0034112">
    <property type="term" value="P:positive regulation of homotypic cell-cell adhesion"/>
    <property type="evidence" value="ECO:0000315"/>
    <property type="project" value="RGD"/>
</dbReference>
<dbReference type="GO" id="GO:1900827">
    <property type="term" value="P:positive regulation of membrane depolarization during cardiac muscle cell action potential"/>
    <property type="evidence" value="ECO:0000314"/>
    <property type="project" value="BHF-UCL"/>
</dbReference>
<dbReference type="GO" id="GO:0045838">
    <property type="term" value="P:positive regulation of membrane potential"/>
    <property type="evidence" value="ECO:0000315"/>
    <property type="project" value="BHF-UCL"/>
</dbReference>
<dbReference type="GO" id="GO:1901224">
    <property type="term" value="P:positive regulation of non-canonical NF-kappaB signal transduction"/>
    <property type="evidence" value="ECO:0000315"/>
    <property type="project" value="RGD"/>
</dbReference>
<dbReference type="GO" id="GO:0090314">
    <property type="term" value="P:positive regulation of protein targeting to membrane"/>
    <property type="evidence" value="ECO:0000315"/>
    <property type="project" value="RGD"/>
</dbReference>
<dbReference type="GO" id="GO:1903784">
    <property type="term" value="P:positive regulation of sodium ion import across plasma membrane"/>
    <property type="evidence" value="ECO:0000315"/>
    <property type="project" value="UniProtKB"/>
</dbReference>
<dbReference type="GO" id="GO:0010765">
    <property type="term" value="P:positive regulation of sodium ion transport"/>
    <property type="evidence" value="ECO:0000314"/>
    <property type="project" value="BHF-UCL"/>
</dbReference>
<dbReference type="GO" id="GO:0099612">
    <property type="term" value="P:protein localization to axon"/>
    <property type="evidence" value="ECO:0000315"/>
    <property type="project" value="UniProtKB"/>
</dbReference>
<dbReference type="GO" id="GO:0072659">
    <property type="term" value="P:protein localization to plasma membrane"/>
    <property type="evidence" value="ECO:0000315"/>
    <property type="project" value="BHF-UCL"/>
</dbReference>
<dbReference type="GO" id="GO:0099159">
    <property type="term" value="P:regulation of modification of postsynaptic structure"/>
    <property type="evidence" value="ECO:0000314"/>
    <property type="project" value="SynGO"/>
</dbReference>
<dbReference type="GO" id="GO:0043266">
    <property type="term" value="P:regulation of potassium ion transport"/>
    <property type="evidence" value="ECO:0000314"/>
    <property type="project" value="BHF-UCL"/>
</dbReference>
<dbReference type="GO" id="GO:1903533">
    <property type="term" value="P:regulation of protein targeting"/>
    <property type="evidence" value="ECO:0000315"/>
    <property type="project" value="RGD"/>
</dbReference>
<dbReference type="GO" id="GO:0006357">
    <property type="term" value="P:regulation of transcription by RNA polymerase II"/>
    <property type="evidence" value="ECO:0000318"/>
    <property type="project" value="GO_Central"/>
</dbReference>
<dbReference type="GO" id="GO:0035902">
    <property type="term" value="P:response to immobilization stress"/>
    <property type="evidence" value="ECO:0000270"/>
    <property type="project" value="RGD"/>
</dbReference>
<dbReference type="GO" id="GO:0007165">
    <property type="term" value="P:signal transduction"/>
    <property type="evidence" value="ECO:0007669"/>
    <property type="project" value="InterPro"/>
</dbReference>
<dbReference type="GO" id="GO:0050808">
    <property type="term" value="P:synapse organization"/>
    <property type="evidence" value="ECO:0000266"/>
    <property type="project" value="RGD"/>
</dbReference>
<dbReference type="CDD" id="cd08803">
    <property type="entry name" value="Death_ank3"/>
    <property type="match status" value="1"/>
</dbReference>
<dbReference type="FunFam" id="1.25.40.20:FF:000003">
    <property type="entry name" value="Ankyrin, isoform B"/>
    <property type="match status" value="1"/>
</dbReference>
<dbReference type="FunFam" id="1.25.40.20:FF:000001">
    <property type="entry name" value="Ankyrin-2 isoform 2"/>
    <property type="match status" value="1"/>
</dbReference>
<dbReference type="FunFam" id="1.25.40.20:FF:000002">
    <property type="entry name" value="Ankyrin-2 isoform 2"/>
    <property type="match status" value="1"/>
</dbReference>
<dbReference type="FunFam" id="1.10.533.10:FF:000002">
    <property type="entry name" value="Ankyrin-3 isoform 2"/>
    <property type="match status" value="1"/>
</dbReference>
<dbReference type="FunFam" id="2.60.220.30:FF:000001">
    <property type="entry name" value="Ankyrin-3 isoform 2"/>
    <property type="match status" value="1"/>
</dbReference>
<dbReference type="FunFam" id="2.60.220.30:FF:000002">
    <property type="entry name" value="Ankyrin-3 isoform 2"/>
    <property type="match status" value="1"/>
</dbReference>
<dbReference type="FunFam" id="2.60.40.2660:FF:000001">
    <property type="entry name" value="Ankyrin-3 isoform 2"/>
    <property type="match status" value="1"/>
</dbReference>
<dbReference type="Gene3D" id="2.60.220.30">
    <property type="match status" value="2"/>
</dbReference>
<dbReference type="Gene3D" id="2.60.40.2660">
    <property type="match status" value="1"/>
</dbReference>
<dbReference type="Gene3D" id="1.25.40.20">
    <property type="entry name" value="Ankyrin repeat-containing domain"/>
    <property type="match status" value="3"/>
</dbReference>
<dbReference type="Gene3D" id="1.10.533.10">
    <property type="entry name" value="Death Domain, Fas"/>
    <property type="match status" value="1"/>
</dbReference>
<dbReference type="InterPro" id="IPR037971">
    <property type="entry name" value="Ank3_Death"/>
</dbReference>
<dbReference type="InterPro" id="IPR002110">
    <property type="entry name" value="Ankyrin_rpt"/>
</dbReference>
<dbReference type="InterPro" id="IPR036770">
    <property type="entry name" value="Ankyrin_rpt-contain_sf"/>
</dbReference>
<dbReference type="InterPro" id="IPR040745">
    <property type="entry name" value="Ankyrin_UPA"/>
</dbReference>
<dbReference type="InterPro" id="IPR011029">
    <property type="entry name" value="DEATH-like_dom_sf"/>
</dbReference>
<dbReference type="InterPro" id="IPR000488">
    <property type="entry name" value="Death_dom"/>
</dbReference>
<dbReference type="InterPro" id="IPR051165">
    <property type="entry name" value="Multifunctional_ANK_Repeat"/>
</dbReference>
<dbReference type="InterPro" id="IPR000906">
    <property type="entry name" value="ZU5_dom"/>
</dbReference>
<dbReference type="PANTHER" id="PTHR24123:SF74">
    <property type="entry name" value="ANKYRIN 3"/>
    <property type="match status" value="1"/>
</dbReference>
<dbReference type="PANTHER" id="PTHR24123">
    <property type="entry name" value="ANKYRIN REPEAT-CONTAINING"/>
    <property type="match status" value="1"/>
</dbReference>
<dbReference type="Pfam" id="PF00023">
    <property type="entry name" value="Ank"/>
    <property type="match status" value="3"/>
</dbReference>
<dbReference type="Pfam" id="PF12796">
    <property type="entry name" value="Ank_2"/>
    <property type="match status" value="7"/>
</dbReference>
<dbReference type="Pfam" id="PF13637">
    <property type="entry name" value="Ank_4"/>
    <property type="match status" value="1"/>
</dbReference>
<dbReference type="Pfam" id="PF00531">
    <property type="entry name" value="Death"/>
    <property type="match status" value="1"/>
</dbReference>
<dbReference type="Pfam" id="PF17809">
    <property type="entry name" value="UPA_2"/>
    <property type="match status" value="1"/>
</dbReference>
<dbReference type="Pfam" id="PF00791">
    <property type="entry name" value="ZU5"/>
    <property type="match status" value="1"/>
</dbReference>
<dbReference type="PRINTS" id="PR01415">
    <property type="entry name" value="ANKYRIN"/>
</dbReference>
<dbReference type="SMART" id="SM00248">
    <property type="entry name" value="ANK"/>
    <property type="match status" value="22"/>
</dbReference>
<dbReference type="SMART" id="SM00005">
    <property type="entry name" value="DEATH"/>
    <property type="match status" value="1"/>
</dbReference>
<dbReference type="SMART" id="SM00218">
    <property type="entry name" value="ZU5"/>
    <property type="match status" value="1"/>
</dbReference>
<dbReference type="SUPFAM" id="SSF48403">
    <property type="entry name" value="Ankyrin repeat"/>
    <property type="match status" value="3"/>
</dbReference>
<dbReference type="SUPFAM" id="SSF47986">
    <property type="entry name" value="DEATH domain"/>
    <property type="match status" value="1"/>
</dbReference>
<dbReference type="PROSITE" id="PS50297">
    <property type="entry name" value="ANK_REP_REGION"/>
    <property type="match status" value="1"/>
</dbReference>
<dbReference type="PROSITE" id="PS50088">
    <property type="entry name" value="ANK_REPEAT"/>
    <property type="match status" value="21"/>
</dbReference>
<dbReference type="PROSITE" id="PS50017">
    <property type="entry name" value="DEATH_DOMAIN"/>
    <property type="match status" value="1"/>
</dbReference>
<dbReference type="PROSITE" id="PS51145">
    <property type="entry name" value="ZU5"/>
    <property type="match status" value="2"/>
</dbReference>
<evidence type="ECO:0000250" key="1">
    <source>
        <dbReference type="UniProtKB" id="G5E8K5"/>
    </source>
</evidence>
<evidence type="ECO:0000250" key="2">
    <source>
        <dbReference type="UniProtKB" id="Q12955"/>
    </source>
</evidence>
<evidence type="ECO:0000255" key="3">
    <source>
        <dbReference type="PROSITE-ProRule" id="PRU00064"/>
    </source>
</evidence>
<evidence type="ECO:0000255" key="4">
    <source>
        <dbReference type="PROSITE-ProRule" id="PRU00485"/>
    </source>
</evidence>
<evidence type="ECO:0000256" key="5">
    <source>
        <dbReference type="SAM" id="MobiDB-lite"/>
    </source>
</evidence>
<evidence type="ECO:0000269" key="6">
    <source>
    </source>
</evidence>
<evidence type="ECO:0000269" key="7">
    <source>
    </source>
</evidence>
<evidence type="ECO:0000269" key="8">
    <source>
    </source>
</evidence>
<evidence type="ECO:0000269" key="9">
    <source>
    </source>
</evidence>
<evidence type="ECO:0000269" key="10">
    <source>
    </source>
</evidence>
<evidence type="ECO:0000269" key="11">
    <source>
    </source>
</evidence>
<evidence type="ECO:0000303" key="12">
    <source>
    </source>
</evidence>
<evidence type="ECO:0000303" key="13">
    <source>
    </source>
</evidence>
<evidence type="ECO:0000305" key="14"/>
<evidence type="ECO:0007744" key="15">
    <source>
    </source>
</evidence>
<evidence type="ECO:0007829" key="16">
    <source>
        <dbReference type="PDB" id="5YIP"/>
    </source>
</evidence>
<evidence type="ECO:0007829" key="17">
    <source>
        <dbReference type="PDB" id="5YIQ"/>
    </source>
</evidence>
<evidence type="ECO:0007829" key="18">
    <source>
        <dbReference type="PDB" id="6M3P"/>
    </source>
</evidence>
<evidence type="ECO:0007829" key="19">
    <source>
        <dbReference type="PDB" id="7XCE"/>
    </source>
</evidence>
<name>ANK3_RAT</name>
<protein>
    <recommendedName>
        <fullName>Ankyrin-3</fullName>
        <shortName>ANK-3</shortName>
    </recommendedName>
    <alternativeName>
        <fullName>Ankyrin-G</fullName>
    </alternativeName>
</protein>
<accession>O70511</accession>
<accession>Q574D7</accession>
<accession>Q574D8</accession>
<accession>Q574D9</accession>
<accession>Q574E0</accession>
<accession>Q574E2</accession>
<accession>Q8VDA0</accession>